<name>PLSX_WOLPP</name>
<proteinExistence type="inferred from homology"/>
<evidence type="ECO:0000255" key="1">
    <source>
        <dbReference type="HAMAP-Rule" id="MF_00019"/>
    </source>
</evidence>
<gene>
    <name evidence="1" type="primary">plsX</name>
    <name type="ordered locus">WP1026</name>
</gene>
<accession>B3CML2</accession>
<reference key="1">
    <citation type="journal article" date="2008" name="Mol. Biol. Evol.">
        <title>Genome evolution of Wolbachia strain wPip from the Culex pipiens group.</title>
        <authorList>
            <person name="Klasson L."/>
            <person name="Walker T."/>
            <person name="Sebaihia M."/>
            <person name="Sanders M.J."/>
            <person name="Quail M.A."/>
            <person name="Lord A."/>
            <person name="Sanders S."/>
            <person name="Earl J."/>
            <person name="O'Neill S.L."/>
            <person name="Thomson N."/>
            <person name="Sinkins S.P."/>
            <person name="Parkhill J."/>
        </authorList>
    </citation>
    <scope>NUCLEOTIDE SEQUENCE [LARGE SCALE GENOMIC DNA]</scope>
    <source>
        <strain>wPip</strain>
    </source>
</reference>
<comment type="function">
    <text evidence="1">Catalyzes the reversible formation of acyl-phosphate (acyl-PO(4)) from acyl-[acyl-carrier-protein] (acyl-ACP). This enzyme utilizes acyl-ACP as fatty acyl donor, but not acyl-CoA.</text>
</comment>
<comment type="catalytic activity">
    <reaction evidence="1">
        <text>a fatty acyl-[ACP] + phosphate = an acyl phosphate + holo-[ACP]</text>
        <dbReference type="Rhea" id="RHEA:42292"/>
        <dbReference type="Rhea" id="RHEA-COMP:9685"/>
        <dbReference type="Rhea" id="RHEA-COMP:14125"/>
        <dbReference type="ChEBI" id="CHEBI:43474"/>
        <dbReference type="ChEBI" id="CHEBI:59918"/>
        <dbReference type="ChEBI" id="CHEBI:64479"/>
        <dbReference type="ChEBI" id="CHEBI:138651"/>
        <dbReference type="EC" id="2.3.1.274"/>
    </reaction>
</comment>
<comment type="pathway">
    <text evidence="1">Lipid metabolism; phospholipid metabolism.</text>
</comment>
<comment type="subunit">
    <text evidence="1">Homodimer. Probably interacts with PlsY.</text>
</comment>
<comment type="subcellular location">
    <subcellularLocation>
        <location evidence="1">Cytoplasm</location>
    </subcellularLocation>
    <text evidence="1">Associated with the membrane possibly through PlsY.</text>
</comment>
<comment type="similarity">
    <text evidence="1">Belongs to the PlsX family.</text>
</comment>
<feature type="chain" id="PRO_1000089950" description="Phosphate acyltransferase">
    <location>
        <begin position="1"/>
        <end position="345"/>
    </location>
</feature>
<dbReference type="EC" id="2.3.1.274" evidence="1"/>
<dbReference type="EMBL" id="AM999887">
    <property type="protein sequence ID" value="CAQ55134.1"/>
    <property type="molecule type" value="Genomic_DNA"/>
</dbReference>
<dbReference type="RefSeq" id="WP_007302406.1">
    <property type="nucleotide sequence ID" value="NC_010981.1"/>
</dbReference>
<dbReference type="SMR" id="B3CML2"/>
<dbReference type="KEGG" id="wpi:WP1026"/>
<dbReference type="eggNOG" id="COG0416">
    <property type="taxonomic scope" value="Bacteria"/>
</dbReference>
<dbReference type="HOGENOM" id="CLU_039379_1_0_5"/>
<dbReference type="UniPathway" id="UPA00085"/>
<dbReference type="Proteomes" id="UP000008814">
    <property type="component" value="Chromosome"/>
</dbReference>
<dbReference type="GO" id="GO:0005737">
    <property type="term" value="C:cytoplasm"/>
    <property type="evidence" value="ECO:0007669"/>
    <property type="project" value="UniProtKB-SubCell"/>
</dbReference>
<dbReference type="GO" id="GO:0043811">
    <property type="term" value="F:phosphate:acyl-[acyl carrier protein] acyltransferase activity"/>
    <property type="evidence" value="ECO:0007669"/>
    <property type="project" value="UniProtKB-UniRule"/>
</dbReference>
<dbReference type="GO" id="GO:0006633">
    <property type="term" value="P:fatty acid biosynthetic process"/>
    <property type="evidence" value="ECO:0007669"/>
    <property type="project" value="UniProtKB-UniRule"/>
</dbReference>
<dbReference type="GO" id="GO:0008654">
    <property type="term" value="P:phospholipid biosynthetic process"/>
    <property type="evidence" value="ECO:0007669"/>
    <property type="project" value="UniProtKB-KW"/>
</dbReference>
<dbReference type="Gene3D" id="3.40.718.10">
    <property type="entry name" value="Isopropylmalate Dehydrogenase"/>
    <property type="match status" value="1"/>
</dbReference>
<dbReference type="HAMAP" id="MF_00019">
    <property type="entry name" value="PlsX"/>
    <property type="match status" value="1"/>
</dbReference>
<dbReference type="InterPro" id="IPR003664">
    <property type="entry name" value="FA_synthesis"/>
</dbReference>
<dbReference type="InterPro" id="IPR012281">
    <property type="entry name" value="Phospholipid_synth_PlsX-like"/>
</dbReference>
<dbReference type="NCBIfam" id="TIGR00182">
    <property type="entry name" value="plsX"/>
    <property type="match status" value="1"/>
</dbReference>
<dbReference type="PANTHER" id="PTHR30100">
    <property type="entry name" value="FATTY ACID/PHOSPHOLIPID SYNTHESIS PROTEIN PLSX"/>
    <property type="match status" value="1"/>
</dbReference>
<dbReference type="PANTHER" id="PTHR30100:SF1">
    <property type="entry name" value="PHOSPHATE ACYLTRANSFERASE"/>
    <property type="match status" value="1"/>
</dbReference>
<dbReference type="Pfam" id="PF02504">
    <property type="entry name" value="FA_synthesis"/>
    <property type="match status" value="1"/>
</dbReference>
<dbReference type="PIRSF" id="PIRSF002465">
    <property type="entry name" value="Phsphlp_syn_PlsX"/>
    <property type="match status" value="1"/>
</dbReference>
<dbReference type="SUPFAM" id="SSF53659">
    <property type="entry name" value="Isocitrate/Isopropylmalate dehydrogenase-like"/>
    <property type="match status" value="1"/>
</dbReference>
<sequence>MLPTVNNNIVIALDAMGGDFAPLSVIQGASFFLDNLVDPGVEVFFHIYGDQKEISPLLSKYKKVSDNSEFTHCSDNVLPNDKPSFALRHRKDSSMKAAVEAVKKGKAFGMVSSGNTGALMAVSRFILGTLPNIYRPAIASVCPTKTKSFALLDLGANVDCNTDSLFQFALMGSIFAKIALKVENPEVALLNIGTEEVKGTDSVRGAFELLKNAPSINFKGYIEASEFLDGNIDVIVADGFVGNVMLKTAEATAGTFISLIKQEVFNSWMTKMLVGILLKPKLNKALERFNPKIRSGAMFLGLNGIIIKSHGNSDAISFAHAIKFAVNAISENLNQKIINGVSHIE</sequence>
<protein>
    <recommendedName>
        <fullName evidence="1">Phosphate acyltransferase</fullName>
        <ecNumber evidence="1">2.3.1.274</ecNumber>
    </recommendedName>
    <alternativeName>
        <fullName evidence="1">Acyl-ACP phosphotransacylase</fullName>
    </alternativeName>
    <alternativeName>
        <fullName evidence="1">Acyl-[acyl-carrier-protein]--phosphate acyltransferase</fullName>
    </alternativeName>
    <alternativeName>
        <fullName evidence="1">Phosphate-acyl-ACP acyltransferase</fullName>
    </alternativeName>
</protein>
<organism>
    <name type="scientific">Wolbachia pipientis subsp. Culex pipiens (strain wPip)</name>
    <dbReference type="NCBI Taxonomy" id="570417"/>
    <lineage>
        <taxon>Bacteria</taxon>
        <taxon>Pseudomonadati</taxon>
        <taxon>Pseudomonadota</taxon>
        <taxon>Alphaproteobacteria</taxon>
        <taxon>Rickettsiales</taxon>
        <taxon>Anaplasmataceae</taxon>
        <taxon>Wolbachieae</taxon>
        <taxon>Wolbachia</taxon>
    </lineage>
</organism>
<keyword id="KW-0963">Cytoplasm</keyword>
<keyword id="KW-0444">Lipid biosynthesis</keyword>
<keyword id="KW-0443">Lipid metabolism</keyword>
<keyword id="KW-0594">Phospholipid biosynthesis</keyword>
<keyword id="KW-1208">Phospholipid metabolism</keyword>
<keyword id="KW-0808">Transferase</keyword>